<name>HSLU_PSEFS</name>
<keyword id="KW-0067">ATP-binding</keyword>
<keyword id="KW-0143">Chaperone</keyword>
<keyword id="KW-0963">Cytoplasm</keyword>
<keyword id="KW-0547">Nucleotide-binding</keyword>
<protein>
    <recommendedName>
        <fullName evidence="1">ATP-dependent protease ATPase subunit HslU</fullName>
    </recommendedName>
    <alternativeName>
        <fullName evidence="1">Unfoldase HslU</fullName>
    </alternativeName>
</protein>
<reference key="1">
    <citation type="journal article" date="2009" name="Genome Biol.">
        <title>Genomic and genetic analyses of diversity and plant interactions of Pseudomonas fluorescens.</title>
        <authorList>
            <person name="Silby M.W."/>
            <person name="Cerdeno-Tarraga A.M."/>
            <person name="Vernikos G.S."/>
            <person name="Giddens S.R."/>
            <person name="Jackson R.W."/>
            <person name="Preston G.M."/>
            <person name="Zhang X.-X."/>
            <person name="Moon C.D."/>
            <person name="Gehrig S.M."/>
            <person name="Godfrey S.A.C."/>
            <person name="Knight C.G."/>
            <person name="Malone J.G."/>
            <person name="Robinson Z."/>
            <person name="Spiers A.J."/>
            <person name="Harris S."/>
            <person name="Challis G.L."/>
            <person name="Yaxley A.M."/>
            <person name="Harris D."/>
            <person name="Seeger K."/>
            <person name="Murphy L."/>
            <person name="Rutter S."/>
            <person name="Squares R."/>
            <person name="Quail M.A."/>
            <person name="Saunders E."/>
            <person name="Mavromatis K."/>
            <person name="Brettin T.S."/>
            <person name="Bentley S.D."/>
            <person name="Hothersall J."/>
            <person name="Stephens E."/>
            <person name="Thomas C.M."/>
            <person name="Parkhill J."/>
            <person name="Levy S.B."/>
            <person name="Rainey P.B."/>
            <person name="Thomson N.R."/>
        </authorList>
    </citation>
    <scope>NUCLEOTIDE SEQUENCE [LARGE SCALE GENOMIC DNA]</scope>
    <source>
        <strain>SBW25</strain>
    </source>
</reference>
<organism>
    <name type="scientific">Pseudomonas fluorescens (strain SBW25)</name>
    <dbReference type="NCBI Taxonomy" id="216595"/>
    <lineage>
        <taxon>Bacteria</taxon>
        <taxon>Pseudomonadati</taxon>
        <taxon>Pseudomonadota</taxon>
        <taxon>Gammaproteobacteria</taxon>
        <taxon>Pseudomonadales</taxon>
        <taxon>Pseudomonadaceae</taxon>
        <taxon>Pseudomonas</taxon>
    </lineage>
</organism>
<proteinExistence type="inferred from homology"/>
<evidence type="ECO:0000255" key="1">
    <source>
        <dbReference type="HAMAP-Rule" id="MF_00249"/>
    </source>
</evidence>
<feature type="chain" id="PRO_1000204527" description="ATP-dependent protease ATPase subunit HslU">
    <location>
        <begin position="1"/>
        <end position="445"/>
    </location>
</feature>
<feature type="binding site" evidence="1">
    <location>
        <position position="17"/>
    </location>
    <ligand>
        <name>ATP</name>
        <dbReference type="ChEBI" id="CHEBI:30616"/>
    </ligand>
</feature>
<feature type="binding site" evidence="1">
    <location>
        <begin position="59"/>
        <end position="64"/>
    </location>
    <ligand>
        <name>ATP</name>
        <dbReference type="ChEBI" id="CHEBI:30616"/>
    </ligand>
</feature>
<feature type="binding site" evidence="1">
    <location>
        <position position="254"/>
    </location>
    <ligand>
        <name>ATP</name>
        <dbReference type="ChEBI" id="CHEBI:30616"/>
    </ligand>
</feature>
<feature type="binding site" evidence="1">
    <location>
        <position position="319"/>
    </location>
    <ligand>
        <name>ATP</name>
        <dbReference type="ChEBI" id="CHEBI:30616"/>
    </ligand>
</feature>
<feature type="binding site" evidence="1">
    <location>
        <position position="391"/>
    </location>
    <ligand>
        <name>ATP</name>
        <dbReference type="ChEBI" id="CHEBI:30616"/>
    </ligand>
</feature>
<dbReference type="EMBL" id="AM181176">
    <property type="protein sequence ID" value="CAY46675.1"/>
    <property type="molecule type" value="Genomic_DNA"/>
</dbReference>
<dbReference type="RefSeq" id="WP_012721807.1">
    <property type="nucleotide sequence ID" value="NC_012660.1"/>
</dbReference>
<dbReference type="SMR" id="C3K8V3"/>
<dbReference type="STRING" id="294.SRM1_00447"/>
<dbReference type="GeneID" id="93461998"/>
<dbReference type="eggNOG" id="COG1220">
    <property type="taxonomic scope" value="Bacteria"/>
</dbReference>
<dbReference type="HOGENOM" id="CLU_033123_0_0_6"/>
<dbReference type="OrthoDB" id="9804062at2"/>
<dbReference type="GO" id="GO:0009376">
    <property type="term" value="C:HslUV protease complex"/>
    <property type="evidence" value="ECO:0007669"/>
    <property type="project" value="UniProtKB-UniRule"/>
</dbReference>
<dbReference type="GO" id="GO:0005524">
    <property type="term" value="F:ATP binding"/>
    <property type="evidence" value="ECO:0007669"/>
    <property type="project" value="UniProtKB-UniRule"/>
</dbReference>
<dbReference type="GO" id="GO:0016887">
    <property type="term" value="F:ATP hydrolysis activity"/>
    <property type="evidence" value="ECO:0007669"/>
    <property type="project" value="InterPro"/>
</dbReference>
<dbReference type="GO" id="GO:0008233">
    <property type="term" value="F:peptidase activity"/>
    <property type="evidence" value="ECO:0007669"/>
    <property type="project" value="InterPro"/>
</dbReference>
<dbReference type="GO" id="GO:0036402">
    <property type="term" value="F:proteasome-activating activity"/>
    <property type="evidence" value="ECO:0007669"/>
    <property type="project" value="UniProtKB-UniRule"/>
</dbReference>
<dbReference type="GO" id="GO:0043335">
    <property type="term" value="P:protein unfolding"/>
    <property type="evidence" value="ECO:0007669"/>
    <property type="project" value="UniProtKB-UniRule"/>
</dbReference>
<dbReference type="GO" id="GO:0051603">
    <property type="term" value="P:proteolysis involved in protein catabolic process"/>
    <property type="evidence" value="ECO:0007669"/>
    <property type="project" value="TreeGrafter"/>
</dbReference>
<dbReference type="CDD" id="cd19498">
    <property type="entry name" value="RecA-like_HslU"/>
    <property type="match status" value="1"/>
</dbReference>
<dbReference type="FunFam" id="1.10.8.10:FF:000028">
    <property type="entry name" value="ATP-dependent protease ATPase subunit HslU"/>
    <property type="match status" value="1"/>
</dbReference>
<dbReference type="FunFam" id="3.40.50.300:FF:000213">
    <property type="entry name" value="ATP-dependent protease ATPase subunit HslU"/>
    <property type="match status" value="1"/>
</dbReference>
<dbReference type="FunFam" id="3.40.50.300:FF:000220">
    <property type="entry name" value="ATP-dependent protease ATPase subunit HslU"/>
    <property type="match status" value="1"/>
</dbReference>
<dbReference type="Gene3D" id="1.10.8.60">
    <property type="match status" value="1"/>
</dbReference>
<dbReference type="Gene3D" id="3.40.50.300">
    <property type="entry name" value="P-loop containing nucleotide triphosphate hydrolases"/>
    <property type="match status" value="2"/>
</dbReference>
<dbReference type="HAMAP" id="MF_00249">
    <property type="entry name" value="HslU"/>
    <property type="match status" value="1"/>
</dbReference>
<dbReference type="InterPro" id="IPR003593">
    <property type="entry name" value="AAA+_ATPase"/>
</dbReference>
<dbReference type="InterPro" id="IPR050052">
    <property type="entry name" value="ATP-dep_Clp_protease_ClpX"/>
</dbReference>
<dbReference type="InterPro" id="IPR003959">
    <property type="entry name" value="ATPase_AAA_core"/>
</dbReference>
<dbReference type="InterPro" id="IPR019489">
    <property type="entry name" value="Clp_ATPase_C"/>
</dbReference>
<dbReference type="InterPro" id="IPR004491">
    <property type="entry name" value="HslU"/>
</dbReference>
<dbReference type="InterPro" id="IPR027417">
    <property type="entry name" value="P-loop_NTPase"/>
</dbReference>
<dbReference type="NCBIfam" id="TIGR00390">
    <property type="entry name" value="hslU"/>
    <property type="match status" value="1"/>
</dbReference>
<dbReference type="NCBIfam" id="NF003544">
    <property type="entry name" value="PRK05201.1"/>
    <property type="match status" value="1"/>
</dbReference>
<dbReference type="PANTHER" id="PTHR48102">
    <property type="entry name" value="ATP-DEPENDENT CLP PROTEASE ATP-BINDING SUBUNIT CLPX-LIKE, MITOCHONDRIAL-RELATED"/>
    <property type="match status" value="1"/>
</dbReference>
<dbReference type="PANTHER" id="PTHR48102:SF3">
    <property type="entry name" value="ATP-DEPENDENT PROTEASE ATPASE SUBUNIT HSLU"/>
    <property type="match status" value="1"/>
</dbReference>
<dbReference type="Pfam" id="PF00004">
    <property type="entry name" value="AAA"/>
    <property type="match status" value="1"/>
</dbReference>
<dbReference type="Pfam" id="PF07724">
    <property type="entry name" value="AAA_2"/>
    <property type="match status" value="1"/>
</dbReference>
<dbReference type="SMART" id="SM00382">
    <property type="entry name" value="AAA"/>
    <property type="match status" value="1"/>
</dbReference>
<dbReference type="SMART" id="SM01086">
    <property type="entry name" value="ClpB_D2-small"/>
    <property type="match status" value="1"/>
</dbReference>
<dbReference type="SUPFAM" id="SSF52540">
    <property type="entry name" value="P-loop containing nucleoside triphosphate hydrolases"/>
    <property type="match status" value="1"/>
</dbReference>
<gene>
    <name evidence="1" type="primary">hslU</name>
    <name type="ordered locus">PFLU_0398</name>
</gene>
<comment type="function">
    <text evidence="1">ATPase subunit of a proteasome-like degradation complex; this subunit has chaperone activity. The binding of ATP and its subsequent hydrolysis by HslU are essential for unfolding of protein substrates subsequently hydrolyzed by HslV. HslU recognizes the N-terminal part of its protein substrates and unfolds these before they are guided to HslV for hydrolysis.</text>
</comment>
<comment type="subunit">
    <text evidence="1">A double ring-shaped homohexamer of HslV is capped on each side by a ring-shaped HslU homohexamer. The assembly of the HslU/HslV complex is dependent on binding of ATP.</text>
</comment>
<comment type="subcellular location">
    <subcellularLocation>
        <location evidence="1">Cytoplasm</location>
    </subcellularLocation>
</comment>
<comment type="similarity">
    <text evidence="1">Belongs to the ClpX chaperone family. HslU subfamily.</text>
</comment>
<sequence>MSMTPREIVHELNRHIIGQDDAKRAVAIALRNRWRRMQLPEELRVEVTPKNILMIGPTGVGKTEIARRLAKLANAPFIKVEATKFTEVGYVGRDVESIIRDLADAALKLLREQEMTKVSHRAEDAAEERILDALLPPARMGFNEDAAPASDSNTRQLFRKRLREGQLDDKEIEIEVAEVSGVDISAPPGMEEMTSQLQNLFANMGKGKKKSRKLKVKEALKLVRDEEAGRLVNEEELKAKALEAVEQHGIVFIDEIDKVAKRGNSGGVDVSREGVQRDLLPLIEGCTVNTKLGMVKTDHILFIASGAFHLSKPSDLVPELQGRLPIRVELKALTPGDFERILSEPHASLTEQYRELLKTEGLGIEFQPDGIKRLAEIAWQVNEKTENIGARRLHTLLERLLEEVSFSAGDLAGAQNGEVIKIDADYVNSHLGELAQNEDLSRYIL</sequence>
<accession>C3K8V3</accession>